<organism>
    <name type="scientific">Salmonella heidelberg (strain SL476)</name>
    <dbReference type="NCBI Taxonomy" id="454169"/>
    <lineage>
        <taxon>Bacteria</taxon>
        <taxon>Pseudomonadati</taxon>
        <taxon>Pseudomonadota</taxon>
        <taxon>Gammaproteobacteria</taxon>
        <taxon>Enterobacterales</taxon>
        <taxon>Enterobacteriaceae</taxon>
        <taxon>Salmonella</taxon>
    </lineage>
</organism>
<name>PDXH_SALHS</name>
<dbReference type="EC" id="1.4.3.5" evidence="1"/>
<dbReference type="EMBL" id="CP001120">
    <property type="protein sequence ID" value="ACF68228.1"/>
    <property type="molecule type" value="Genomic_DNA"/>
</dbReference>
<dbReference type="RefSeq" id="WP_001282334.1">
    <property type="nucleotide sequence ID" value="NC_011083.1"/>
</dbReference>
<dbReference type="SMR" id="B4THC5"/>
<dbReference type="KEGG" id="seh:SeHA_C1618"/>
<dbReference type="HOGENOM" id="CLU_032263_2_2_6"/>
<dbReference type="UniPathway" id="UPA01068">
    <property type="reaction ID" value="UER00304"/>
</dbReference>
<dbReference type="UniPathway" id="UPA01068">
    <property type="reaction ID" value="UER00305"/>
</dbReference>
<dbReference type="Proteomes" id="UP000001866">
    <property type="component" value="Chromosome"/>
</dbReference>
<dbReference type="GO" id="GO:0010181">
    <property type="term" value="F:FMN binding"/>
    <property type="evidence" value="ECO:0007669"/>
    <property type="project" value="UniProtKB-UniRule"/>
</dbReference>
<dbReference type="GO" id="GO:0004733">
    <property type="term" value="F:pyridoxamine phosphate oxidase activity"/>
    <property type="evidence" value="ECO:0007669"/>
    <property type="project" value="UniProtKB-UniRule"/>
</dbReference>
<dbReference type="GO" id="GO:0008615">
    <property type="term" value="P:pyridoxine biosynthetic process"/>
    <property type="evidence" value="ECO:0007669"/>
    <property type="project" value="UniProtKB-KW"/>
</dbReference>
<dbReference type="FunFam" id="2.30.110.10:FF:000001">
    <property type="entry name" value="Pyridoxine/pyridoxamine 5'-phosphate oxidase"/>
    <property type="match status" value="1"/>
</dbReference>
<dbReference type="Gene3D" id="2.30.110.10">
    <property type="entry name" value="Electron Transport, Fmn-binding Protein, Chain A"/>
    <property type="match status" value="1"/>
</dbReference>
<dbReference type="HAMAP" id="MF_01629">
    <property type="entry name" value="PdxH"/>
    <property type="match status" value="1"/>
</dbReference>
<dbReference type="InterPro" id="IPR000659">
    <property type="entry name" value="Pyridox_Oxase"/>
</dbReference>
<dbReference type="InterPro" id="IPR019740">
    <property type="entry name" value="Pyridox_Oxase_CS"/>
</dbReference>
<dbReference type="InterPro" id="IPR011576">
    <property type="entry name" value="Pyridox_Oxase_N"/>
</dbReference>
<dbReference type="InterPro" id="IPR019576">
    <property type="entry name" value="Pyridoxamine_oxidase_dimer_C"/>
</dbReference>
<dbReference type="InterPro" id="IPR012349">
    <property type="entry name" value="Split_barrel_FMN-bd"/>
</dbReference>
<dbReference type="NCBIfam" id="TIGR00558">
    <property type="entry name" value="pdxH"/>
    <property type="match status" value="1"/>
</dbReference>
<dbReference type="NCBIfam" id="NF004231">
    <property type="entry name" value="PRK05679.1"/>
    <property type="match status" value="1"/>
</dbReference>
<dbReference type="PANTHER" id="PTHR10851:SF0">
    <property type="entry name" value="PYRIDOXINE-5'-PHOSPHATE OXIDASE"/>
    <property type="match status" value="1"/>
</dbReference>
<dbReference type="PANTHER" id="PTHR10851">
    <property type="entry name" value="PYRIDOXINE-5-PHOSPHATE OXIDASE"/>
    <property type="match status" value="1"/>
</dbReference>
<dbReference type="Pfam" id="PF10590">
    <property type="entry name" value="PNP_phzG_C"/>
    <property type="match status" value="1"/>
</dbReference>
<dbReference type="Pfam" id="PF01243">
    <property type="entry name" value="PNPOx_N"/>
    <property type="match status" value="1"/>
</dbReference>
<dbReference type="PIRSF" id="PIRSF000190">
    <property type="entry name" value="Pyd_amn-ph_oxd"/>
    <property type="match status" value="1"/>
</dbReference>
<dbReference type="SUPFAM" id="SSF50475">
    <property type="entry name" value="FMN-binding split barrel"/>
    <property type="match status" value="1"/>
</dbReference>
<dbReference type="PROSITE" id="PS01064">
    <property type="entry name" value="PYRIDOX_OXIDASE"/>
    <property type="match status" value="1"/>
</dbReference>
<evidence type="ECO:0000255" key="1">
    <source>
        <dbReference type="HAMAP-Rule" id="MF_01629"/>
    </source>
</evidence>
<proteinExistence type="inferred from homology"/>
<keyword id="KW-0285">Flavoprotein</keyword>
<keyword id="KW-0288">FMN</keyword>
<keyword id="KW-0560">Oxidoreductase</keyword>
<keyword id="KW-0664">Pyridoxine biosynthesis</keyword>
<sequence>MSDNDQLQQIAHLRREYTKGGLRRRDLPAEPLTLFERWLGQACDARLADPTAMVVATVDDKGQPYQRIVLLKHYDEKGLVFYTNLGSRKAHQIEHNPRISLLFPWHMLERQVMVTGKAERLSTLEVVRYFHSRPRDSQIGAWVSKQSSRISARGILESKFLELKQKFQQGEVPLPSFWGGFRVSIEQMEFWQGGEHRLHDRFLYQRDDGAWKIDRLAP</sequence>
<protein>
    <recommendedName>
        <fullName evidence="1">Pyridoxine/pyridoxamine 5'-phosphate oxidase</fullName>
        <ecNumber evidence="1">1.4.3.5</ecNumber>
    </recommendedName>
    <alternativeName>
        <fullName evidence="1">PNP/PMP oxidase</fullName>
        <shortName evidence="1">PNPOx</shortName>
    </alternativeName>
    <alternativeName>
        <fullName evidence="1">Pyridoxal 5'-phosphate synthase</fullName>
    </alternativeName>
</protein>
<gene>
    <name evidence="1" type="primary">pdxH</name>
    <name type="ordered locus">SeHA_C1618</name>
</gene>
<reference key="1">
    <citation type="journal article" date="2011" name="J. Bacteriol.">
        <title>Comparative genomics of 28 Salmonella enterica isolates: evidence for CRISPR-mediated adaptive sublineage evolution.</title>
        <authorList>
            <person name="Fricke W.F."/>
            <person name="Mammel M.K."/>
            <person name="McDermott P.F."/>
            <person name="Tartera C."/>
            <person name="White D.G."/>
            <person name="Leclerc J.E."/>
            <person name="Ravel J."/>
            <person name="Cebula T.A."/>
        </authorList>
    </citation>
    <scope>NUCLEOTIDE SEQUENCE [LARGE SCALE GENOMIC DNA]</scope>
    <source>
        <strain>SL476</strain>
    </source>
</reference>
<accession>B4THC5</accession>
<feature type="chain" id="PRO_1000186336" description="Pyridoxine/pyridoxamine 5'-phosphate oxidase">
    <location>
        <begin position="1"/>
        <end position="218"/>
    </location>
</feature>
<feature type="binding site" evidence="1">
    <location>
        <begin position="14"/>
        <end position="17"/>
    </location>
    <ligand>
        <name>substrate</name>
    </ligand>
</feature>
<feature type="binding site" evidence="1">
    <location>
        <begin position="67"/>
        <end position="72"/>
    </location>
    <ligand>
        <name>FMN</name>
        <dbReference type="ChEBI" id="CHEBI:58210"/>
    </ligand>
</feature>
<feature type="binding site" evidence="1">
    <location>
        <position position="72"/>
    </location>
    <ligand>
        <name>substrate</name>
    </ligand>
</feature>
<feature type="binding site" evidence="1">
    <location>
        <begin position="82"/>
        <end position="83"/>
    </location>
    <ligand>
        <name>FMN</name>
        <dbReference type="ChEBI" id="CHEBI:58210"/>
    </ligand>
</feature>
<feature type="binding site" evidence="1">
    <location>
        <position position="88"/>
    </location>
    <ligand>
        <name>FMN</name>
        <dbReference type="ChEBI" id="CHEBI:58210"/>
    </ligand>
</feature>
<feature type="binding site" evidence="1">
    <location>
        <position position="89"/>
    </location>
    <ligand>
        <name>FMN</name>
        <dbReference type="ChEBI" id="CHEBI:58210"/>
    </ligand>
</feature>
<feature type="binding site" evidence="1">
    <location>
        <position position="111"/>
    </location>
    <ligand>
        <name>FMN</name>
        <dbReference type="ChEBI" id="CHEBI:58210"/>
    </ligand>
</feature>
<feature type="binding site" evidence="1">
    <location>
        <position position="129"/>
    </location>
    <ligand>
        <name>substrate</name>
    </ligand>
</feature>
<feature type="binding site" evidence="1">
    <location>
        <position position="133"/>
    </location>
    <ligand>
        <name>substrate</name>
    </ligand>
</feature>
<feature type="binding site" evidence="1">
    <location>
        <position position="137"/>
    </location>
    <ligand>
        <name>substrate</name>
    </ligand>
</feature>
<feature type="binding site" evidence="1">
    <location>
        <begin position="146"/>
        <end position="147"/>
    </location>
    <ligand>
        <name>FMN</name>
        <dbReference type="ChEBI" id="CHEBI:58210"/>
    </ligand>
</feature>
<feature type="binding site" evidence="1">
    <location>
        <position position="191"/>
    </location>
    <ligand>
        <name>FMN</name>
        <dbReference type="ChEBI" id="CHEBI:58210"/>
    </ligand>
</feature>
<feature type="binding site" evidence="1">
    <location>
        <begin position="197"/>
        <end position="199"/>
    </location>
    <ligand>
        <name>substrate</name>
    </ligand>
</feature>
<feature type="binding site" evidence="1">
    <location>
        <position position="201"/>
    </location>
    <ligand>
        <name>FMN</name>
        <dbReference type="ChEBI" id="CHEBI:58210"/>
    </ligand>
</feature>
<comment type="function">
    <text evidence="1">Catalyzes the oxidation of either pyridoxine 5'-phosphate (PNP) or pyridoxamine 5'-phosphate (PMP) into pyridoxal 5'-phosphate (PLP).</text>
</comment>
<comment type="catalytic activity">
    <reaction evidence="1">
        <text>pyridoxamine 5'-phosphate + O2 + H2O = pyridoxal 5'-phosphate + H2O2 + NH4(+)</text>
        <dbReference type="Rhea" id="RHEA:15817"/>
        <dbReference type="ChEBI" id="CHEBI:15377"/>
        <dbReference type="ChEBI" id="CHEBI:15379"/>
        <dbReference type="ChEBI" id="CHEBI:16240"/>
        <dbReference type="ChEBI" id="CHEBI:28938"/>
        <dbReference type="ChEBI" id="CHEBI:58451"/>
        <dbReference type="ChEBI" id="CHEBI:597326"/>
        <dbReference type="EC" id="1.4.3.5"/>
    </reaction>
</comment>
<comment type="catalytic activity">
    <reaction evidence="1">
        <text>pyridoxine 5'-phosphate + O2 = pyridoxal 5'-phosphate + H2O2</text>
        <dbReference type="Rhea" id="RHEA:15149"/>
        <dbReference type="ChEBI" id="CHEBI:15379"/>
        <dbReference type="ChEBI" id="CHEBI:16240"/>
        <dbReference type="ChEBI" id="CHEBI:58589"/>
        <dbReference type="ChEBI" id="CHEBI:597326"/>
        <dbReference type="EC" id="1.4.3.5"/>
    </reaction>
</comment>
<comment type="cofactor">
    <cofactor evidence="1">
        <name>FMN</name>
        <dbReference type="ChEBI" id="CHEBI:58210"/>
    </cofactor>
    <text evidence="1">Binds 1 FMN per subunit.</text>
</comment>
<comment type="pathway">
    <text evidence="1">Cofactor metabolism; pyridoxal 5'-phosphate salvage; pyridoxal 5'-phosphate from pyridoxamine 5'-phosphate: step 1/1.</text>
</comment>
<comment type="pathway">
    <text evidence="1">Cofactor metabolism; pyridoxal 5'-phosphate salvage; pyridoxal 5'-phosphate from pyridoxine 5'-phosphate: step 1/1.</text>
</comment>
<comment type="subunit">
    <text evidence="1">Homodimer.</text>
</comment>
<comment type="similarity">
    <text evidence="1">Belongs to the pyridoxamine 5'-phosphate oxidase family.</text>
</comment>